<gene>
    <name evidence="1" type="primary">psbM</name>
</gene>
<dbReference type="EMBL" id="D17510">
    <property type="protein sequence ID" value="BAA04333.1"/>
    <property type="molecule type" value="Genomic_DNA"/>
</dbReference>
<dbReference type="PIR" id="T07455">
    <property type="entry name" value="T07455"/>
</dbReference>
<dbReference type="RefSeq" id="NP_042376.1">
    <property type="nucleotide sequence ID" value="NC_001631.1"/>
</dbReference>
<dbReference type="SMR" id="P41608"/>
<dbReference type="GeneID" id="809072"/>
<dbReference type="GO" id="GO:0009535">
    <property type="term" value="C:chloroplast thylakoid membrane"/>
    <property type="evidence" value="ECO:0007669"/>
    <property type="project" value="UniProtKB-SubCell"/>
</dbReference>
<dbReference type="GO" id="GO:0009523">
    <property type="term" value="C:photosystem II"/>
    <property type="evidence" value="ECO:0007669"/>
    <property type="project" value="UniProtKB-KW"/>
</dbReference>
<dbReference type="GO" id="GO:0019684">
    <property type="term" value="P:photosynthesis, light reaction"/>
    <property type="evidence" value="ECO:0007669"/>
    <property type="project" value="InterPro"/>
</dbReference>
<dbReference type="HAMAP" id="MF_00438">
    <property type="entry name" value="PSII_PsbM"/>
    <property type="match status" value="1"/>
</dbReference>
<dbReference type="InterPro" id="IPR007826">
    <property type="entry name" value="PSII_PsbM"/>
</dbReference>
<dbReference type="InterPro" id="IPR037269">
    <property type="entry name" value="PSII_PsbM_sf"/>
</dbReference>
<dbReference type="NCBIfam" id="TIGR03038">
    <property type="entry name" value="PS_II_psbM"/>
    <property type="match status" value="1"/>
</dbReference>
<dbReference type="PANTHER" id="PTHR35774">
    <property type="entry name" value="PHOTOSYSTEM II REACTION CENTER PROTEIN M"/>
    <property type="match status" value="1"/>
</dbReference>
<dbReference type="PANTHER" id="PTHR35774:SF1">
    <property type="entry name" value="PHOTOSYSTEM II REACTION CENTER PROTEIN M"/>
    <property type="match status" value="1"/>
</dbReference>
<dbReference type="Pfam" id="PF05151">
    <property type="entry name" value="PsbM"/>
    <property type="match status" value="1"/>
</dbReference>
<dbReference type="SUPFAM" id="SSF161033">
    <property type="entry name" value="Photosystem II reaction center protein M, PsbM"/>
    <property type="match status" value="1"/>
</dbReference>
<keyword id="KW-0150">Chloroplast</keyword>
<keyword id="KW-0472">Membrane</keyword>
<keyword id="KW-0602">Photosynthesis</keyword>
<keyword id="KW-0604">Photosystem II</keyword>
<keyword id="KW-0934">Plastid</keyword>
<keyword id="KW-0674">Reaction center</keyword>
<keyword id="KW-0793">Thylakoid</keyword>
<keyword id="KW-0812">Transmembrane</keyword>
<keyword id="KW-1133">Transmembrane helix</keyword>
<proteinExistence type="inferred from homology"/>
<reference key="1">
    <citation type="journal article" date="1994" name="Proc. Natl. Acad. Sci. U.S.A.">
        <title>Loss of all ndh genes as determined by sequencing the entire chloroplast genome of the black pine Pinus thunbergii.</title>
        <authorList>
            <person name="Wakasugi T."/>
            <person name="Tsudzuki J."/>
            <person name="Ito S."/>
            <person name="Nakashima K."/>
            <person name="Tsudzuki T."/>
            <person name="Sugiura M."/>
        </authorList>
    </citation>
    <scope>NUCLEOTIDE SEQUENCE [LARGE SCALE GENOMIC DNA]</scope>
</reference>
<sequence>MEVNTLAFIAVLLFLAVPTAFLLIPYVKTASASSGSN</sequence>
<protein>
    <recommendedName>
        <fullName evidence="1">Photosystem II reaction center protein M</fullName>
        <shortName evidence="1">PSII-M</shortName>
    </recommendedName>
</protein>
<organism>
    <name type="scientific">Pinus thunbergii</name>
    <name type="common">Japanese black pine</name>
    <name type="synonym">Pinus thunbergiana</name>
    <dbReference type="NCBI Taxonomy" id="3350"/>
    <lineage>
        <taxon>Eukaryota</taxon>
        <taxon>Viridiplantae</taxon>
        <taxon>Streptophyta</taxon>
        <taxon>Embryophyta</taxon>
        <taxon>Tracheophyta</taxon>
        <taxon>Spermatophyta</taxon>
        <taxon>Pinopsida</taxon>
        <taxon>Pinidae</taxon>
        <taxon>Conifers I</taxon>
        <taxon>Pinales</taxon>
        <taxon>Pinaceae</taxon>
        <taxon>Pinus</taxon>
        <taxon>Pinus subgen. Pinus</taxon>
    </lineage>
</organism>
<evidence type="ECO:0000255" key="1">
    <source>
        <dbReference type="HAMAP-Rule" id="MF_00438"/>
    </source>
</evidence>
<name>PSBM_PINTH</name>
<feature type="chain" id="PRO_0000217573" description="Photosystem II reaction center protein M">
    <location>
        <begin position="1"/>
        <end position="37"/>
    </location>
</feature>
<feature type="transmembrane region" description="Helical" evidence="1">
    <location>
        <begin position="7"/>
        <end position="27"/>
    </location>
</feature>
<geneLocation type="chloroplast"/>
<comment type="function">
    <text evidence="1">One of the components of the core complex of photosystem II (PSII). PSII is a light-driven water:plastoquinone oxidoreductase that uses light energy to abstract electrons from H(2)O, generating O(2) and a proton gradient subsequently used for ATP formation. It consists of a core antenna complex that captures photons, and an electron transfer chain that converts photonic excitation into a charge separation. This subunit is found at the monomer-monomer interface.</text>
</comment>
<comment type="subunit">
    <text evidence="1">PSII is composed of 1 copy each of membrane proteins PsbA, PsbB, PsbC, PsbD, PsbE, PsbF, PsbH, PsbI, PsbJ, PsbK, PsbL, PsbM, PsbT, PsbX, PsbY, PsbZ, Psb30/Ycf12, at least 3 peripheral proteins of the oxygen-evolving complex and a large number of cofactors. It forms dimeric complexes.</text>
</comment>
<comment type="subcellular location">
    <subcellularLocation>
        <location evidence="1">Plastid</location>
        <location evidence="1">Chloroplast thylakoid membrane</location>
        <topology evidence="1">Single-pass membrane protein</topology>
    </subcellularLocation>
</comment>
<comment type="similarity">
    <text evidence="1">Belongs to the PsbM family.</text>
</comment>
<accession>P41608</accession>